<evidence type="ECO:0000250" key="1"/>
<evidence type="ECO:0000250" key="2">
    <source>
        <dbReference type="UniProtKB" id="P80075"/>
    </source>
</evidence>
<evidence type="ECO:0000305" key="3"/>
<feature type="signal peptide" evidence="2">
    <location>
        <begin position="1"/>
        <end position="23"/>
    </location>
</feature>
<feature type="chain" id="PRO_0000005191" description="C-C motif chemokine 8">
    <location>
        <begin position="24"/>
        <end position="99"/>
    </location>
</feature>
<feature type="modified residue" description="Pyrrolidone carboxylic acid" evidence="2">
    <location>
        <position position="24"/>
    </location>
</feature>
<feature type="disulfide bond" evidence="1">
    <location>
        <begin position="34"/>
        <end position="59"/>
    </location>
</feature>
<feature type="disulfide bond" evidence="1">
    <location>
        <begin position="35"/>
        <end position="75"/>
    </location>
</feature>
<dbReference type="EMBL" id="Z48480">
    <property type="protein sequence ID" value="CAA88371.1"/>
    <property type="molecule type" value="mRNA"/>
</dbReference>
<dbReference type="PIR" id="JC2417">
    <property type="entry name" value="JC2417"/>
</dbReference>
<dbReference type="SMR" id="P49873"/>
<dbReference type="FunCoup" id="P49873">
    <property type="interactions" value="55"/>
</dbReference>
<dbReference type="STRING" id="9823.ENSSSCP00000032773"/>
<dbReference type="PaxDb" id="9823-ENSSSCP00000018777"/>
<dbReference type="Ensembl" id="ENSSSCT00035084710.1">
    <property type="protein sequence ID" value="ENSSSCP00035035237.1"/>
    <property type="gene ID" value="ENSSSCG00035063005.1"/>
</dbReference>
<dbReference type="Ensembl" id="ENSSSCT00065092718.1">
    <property type="protein sequence ID" value="ENSSSCP00065040569.1"/>
    <property type="gene ID" value="ENSSSCG00065067533.1"/>
</dbReference>
<dbReference type="Ensembl" id="ENSSSCT00110062500">
    <property type="protein sequence ID" value="ENSSSCP00110043751"/>
    <property type="gene ID" value="ENSSSCG00110032760"/>
</dbReference>
<dbReference type="eggNOG" id="ENOG502S8M4">
    <property type="taxonomic scope" value="Eukaryota"/>
</dbReference>
<dbReference type="InParanoid" id="P49873"/>
<dbReference type="Proteomes" id="UP000008227">
    <property type="component" value="Unplaced"/>
</dbReference>
<dbReference type="Proteomes" id="UP000314985">
    <property type="component" value="Unplaced"/>
</dbReference>
<dbReference type="Proteomes" id="UP000694570">
    <property type="component" value="Unplaced"/>
</dbReference>
<dbReference type="Proteomes" id="UP000694571">
    <property type="component" value="Unplaced"/>
</dbReference>
<dbReference type="Proteomes" id="UP000694720">
    <property type="component" value="Unplaced"/>
</dbReference>
<dbReference type="Proteomes" id="UP000694722">
    <property type="component" value="Unplaced"/>
</dbReference>
<dbReference type="Proteomes" id="UP000694723">
    <property type="component" value="Unplaced"/>
</dbReference>
<dbReference type="Proteomes" id="UP000694724">
    <property type="component" value="Unplaced"/>
</dbReference>
<dbReference type="Proteomes" id="UP000694725">
    <property type="component" value="Unplaced"/>
</dbReference>
<dbReference type="Proteomes" id="UP000694726">
    <property type="component" value="Unplaced"/>
</dbReference>
<dbReference type="Proteomes" id="UP000694727">
    <property type="component" value="Unplaced"/>
</dbReference>
<dbReference type="Proteomes" id="UP000694728">
    <property type="component" value="Unplaced"/>
</dbReference>
<dbReference type="GO" id="GO:0005615">
    <property type="term" value="C:extracellular space"/>
    <property type="evidence" value="ECO:0000318"/>
    <property type="project" value="GO_Central"/>
</dbReference>
<dbReference type="GO" id="GO:0048020">
    <property type="term" value="F:CCR chemokine receptor binding"/>
    <property type="evidence" value="ECO:0000318"/>
    <property type="project" value="GO_Central"/>
</dbReference>
<dbReference type="GO" id="GO:0008009">
    <property type="term" value="F:chemokine activity"/>
    <property type="evidence" value="ECO:0000318"/>
    <property type="project" value="GO_Central"/>
</dbReference>
<dbReference type="GO" id="GO:0008201">
    <property type="term" value="F:heparin binding"/>
    <property type="evidence" value="ECO:0007669"/>
    <property type="project" value="UniProtKB-KW"/>
</dbReference>
<dbReference type="GO" id="GO:0061844">
    <property type="term" value="P:antimicrobial humoral immune response mediated by antimicrobial peptide"/>
    <property type="evidence" value="ECO:0000318"/>
    <property type="project" value="GO_Central"/>
</dbReference>
<dbReference type="GO" id="GO:0070098">
    <property type="term" value="P:chemokine-mediated signaling pathway"/>
    <property type="evidence" value="ECO:0000318"/>
    <property type="project" value="GO_Central"/>
</dbReference>
<dbReference type="GO" id="GO:0048245">
    <property type="term" value="P:eosinophil chemotaxis"/>
    <property type="evidence" value="ECO:0000318"/>
    <property type="project" value="GO_Central"/>
</dbReference>
<dbReference type="GO" id="GO:0006954">
    <property type="term" value="P:inflammatory response"/>
    <property type="evidence" value="ECO:0000318"/>
    <property type="project" value="GO_Central"/>
</dbReference>
<dbReference type="GO" id="GO:0030335">
    <property type="term" value="P:positive regulation of cell migration"/>
    <property type="evidence" value="ECO:0000318"/>
    <property type="project" value="GO_Central"/>
</dbReference>
<dbReference type="CDD" id="cd00272">
    <property type="entry name" value="Chemokine_CC"/>
    <property type="match status" value="1"/>
</dbReference>
<dbReference type="FunFam" id="2.40.50.40:FF:000002">
    <property type="entry name" value="C-C motif chemokine"/>
    <property type="match status" value="1"/>
</dbReference>
<dbReference type="Gene3D" id="2.40.50.40">
    <property type="match status" value="1"/>
</dbReference>
<dbReference type="InterPro" id="IPR039809">
    <property type="entry name" value="Chemokine_b/g/d"/>
</dbReference>
<dbReference type="InterPro" id="IPR000827">
    <property type="entry name" value="Chemokine_CC_CS"/>
</dbReference>
<dbReference type="InterPro" id="IPR001811">
    <property type="entry name" value="Chemokine_IL8-like_dom"/>
</dbReference>
<dbReference type="InterPro" id="IPR036048">
    <property type="entry name" value="Interleukin_8-like_sf"/>
</dbReference>
<dbReference type="PANTHER" id="PTHR12015:SF209">
    <property type="entry name" value="C-C MOTIF CHEMOKINE 8"/>
    <property type="match status" value="1"/>
</dbReference>
<dbReference type="PANTHER" id="PTHR12015">
    <property type="entry name" value="SMALL INDUCIBLE CYTOKINE A"/>
    <property type="match status" value="1"/>
</dbReference>
<dbReference type="Pfam" id="PF00048">
    <property type="entry name" value="IL8"/>
    <property type="match status" value="1"/>
</dbReference>
<dbReference type="SMART" id="SM00199">
    <property type="entry name" value="SCY"/>
    <property type="match status" value="1"/>
</dbReference>
<dbReference type="SUPFAM" id="SSF54117">
    <property type="entry name" value="Interleukin 8-like chemokines"/>
    <property type="match status" value="1"/>
</dbReference>
<dbReference type="PROSITE" id="PS00472">
    <property type="entry name" value="SMALL_CYTOKINES_CC"/>
    <property type="match status" value="1"/>
</dbReference>
<keyword id="KW-0145">Chemotaxis</keyword>
<keyword id="KW-0202">Cytokine</keyword>
<keyword id="KW-1015">Disulfide bond</keyword>
<keyword id="KW-0358">Heparin-binding</keyword>
<keyword id="KW-0395">Inflammatory response</keyword>
<keyword id="KW-0873">Pyrrolidone carboxylic acid</keyword>
<keyword id="KW-1185">Reference proteome</keyword>
<keyword id="KW-0964">Secreted</keyword>
<keyword id="KW-0732">Signal</keyword>
<gene>
    <name type="primary">CCL8</name>
    <name type="synonym">MCP2</name>
    <name type="synonym">SCYA8</name>
</gene>
<name>CCL8_PIG</name>
<sequence>MQVSAALLCLLLTTAAFSTQVLAQPDSVSIPITCCFGLVNGKIPFKKLESYTRITNSQCPQEAVIFKTKADKEVCADPQQKWVQNSMKLLDQKSQTPKP</sequence>
<accession>P49873</accession>
<organism>
    <name type="scientific">Sus scrofa</name>
    <name type="common">Pig</name>
    <dbReference type="NCBI Taxonomy" id="9823"/>
    <lineage>
        <taxon>Eukaryota</taxon>
        <taxon>Metazoa</taxon>
        <taxon>Chordata</taxon>
        <taxon>Craniata</taxon>
        <taxon>Vertebrata</taxon>
        <taxon>Euteleostomi</taxon>
        <taxon>Mammalia</taxon>
        <taxon>Eutheria</taxon>
        <taxon>Laurasiatheria</taxon>
        <taxon>Artiodactyla</taxon>
        <taxon>Suina</taxon>
        <taxon>Suidae</taxon>
        <taxon>Sus</taxon>
    </lineage>
</organism>
<proteinExistence type="inferred from homology"/>
<comment type="function">
    <text>Chemotactic factor that attracts monocytes. This protein can bind heparin.</text>
</comment>
<comment type="subunit">
    <text evidence="1">Monomer or homodimer; in equilibrium.</text>
</comment>
<comment type="subcellular location">
    <subcellularLocation>
        <location evidence="1">Secreted</location>
    </subcellularLocation>
</comment>
<comment type="similarity">
    <text evidence="3">Belongs to the intercrine beta (chemokine CC) family.</text>
</comment>
<protein>
    <recommendedName>
        <fullName>C-C motif chemokine 8</fullName>
    </recommendedName>
    <alternativeName>
        <fullName>Monocyte chemoattractant protein 2</fullName>
    </alternativeName>
    <alternativeName>
        <fullName>Monocyte chemotactic protein 2</fullName>
        <shortName>MCP-2</shortName>
    </alternativeName>
    <alternativeName>
        <fullName>Small-inducible cytokine A8</fullName>
    </alternativeName>
</protein>
<reference key="1">
    <citation type="journal article" date="1994" name="Biochem. Biophys. Res. Commun.">
        <title>Porcine luteal cells express monocyte chemoattractant protein-2 (MCP-2): analysis by cDNA cloning and northern analysis.</title>
        <authorList>
            <person name="Hosang K.K."/>
            <person name="Knoke I.I."/>
            <person name="Klaudiny J.J."/>
            <person name="Wempe F.F."/>
            <person name="Wuttke W.W."/>
            <person name="Scheit K.K."/>
        </authorList>
    </citation>
    <scope>NUCLEOTIDE SEQUENCE [MRNA]</scope>
</reference>